<keyword id="KW-1185">Reference proteome</keyword>
<keyword id="KW-0687">Ribonucleoprotein</keyword>
<keyword id="KW-0689">Ribosomal protein</keyword>
<keyword id="KW-0694">RNA-binding</keyword>
<keyword id="KW-0699">rRNA-binding</keyword>
<keyword id="KW-0820">tRNA-binding</keyword>
<accession>B7J474</accession>
<protein>
    <recommendedName>
        <fullName evidence="1">Large ribosomal subunit protein uL16</fullName>
    </recommendedName>
    <alternativeName>
        <fullName evidence="3">50S ribosomal protein L16</fullName>
    </alternativeName>
</protein>
<gene>
    <name evidence="1" type="primary">rplP</name>
    <name type="ordered locus">AFE_0334</name>
</gene>
<name>RL16_ACIF2</name>
<dbReference type="EMBL" id="CP001219">
    <property type="protein sequence ID" value="ACK79285.1"/>
    <property type="molecule type" value="Genomic_DNA"/>
</dbReference>
<dbReference type="RefSeq" id="WP_012536088.1">
    <property type="nucleotide sequence ID" value="NC_011761.1"/>
</dbReference>
<dbReference type="SMR" id="B7J474"/>
<dbReference type="STRING" id="243159.AFE_0334"/>
<dbReference type="PaxDb" id="243159-AFE_0334"/>
<dbReference type="GeneID" id="65279713"/>
<dbReference type="KEGG" id="afr:AFE_0334"/>
<dbReference type="eggNOG" id="COG0197">
    <property type="taxonomic scope" value="Bacteria"/>
</dbReference>
<dbReference type="HOGENOM" id="CLU_078858_2_1_6"/>
<dbReference type="Proteomes" id="UP000001362">
    <property type="component" value="Chromosome"/>
</dbReference>
<dbReference type="GO" id="GO:0022625">
    <property type="term" value="C:cytosolic large ribosomal subunit"/>
    <property type="evidence" value="ECO:0007669"/>
    <property type="project" value="TreeGrafter"/>
</dbReference>
<dbReference type="GO" id="GO:0019843">
    <property type="term" value="F:rRNA binding"/>
    <property type="evidence" value="ECO:0007669"/>
    <property type="project" value="UniProtKB-UniRule"/>
</dbReference>
<dbReference type="GO" id="GO:0003735">
    <property type="term" value="F:structural constituent of ribosome"/>
    <property type="evidence" value="ECO:0007669"/>
    <property type="project" value="InterPro"/>
</dbReference>
<dbReference type="GO" id="GO:0000049">
    <property type="term" value="F:tRNA binding"/>
    <property type="evidence" value="ECO:0007669"/>
    <property type="project" value="UniProtKB-KW"/>
</dbReference>
<dbReference type="GO" id="GO:0006412">
    <property type="term" value="P:translation"/>
    <property type="evidence" value="ECO:0007669"/>
    <property type="project" value="UniProtKB-UniRule"/>
</dbReference>
<dbReference type="CDD" id="cd01433">
    <property type="entry name" value="Ribosomal_L16_L10e"/>
    <property type="match status" value="1"/>
</dbReference>
<dbReference type="FunFam" id="3.90.1170.10:FF:000001">
    <property type="entry name" value="50S ribosomal protein L16"/>
    <property type="match status" value="1"/>
</dbReference>
<dbReference type="Gene3D" id="3.90.1170.10">
    <property type="entry name" value="Ribosomal protein L10e/L16"/>
    <property type="match status" value="1"/>
</dbReference>
<dbReference type="HAMAP" id="MF_01342">
    <property type="entry name" value="Ribosomal_uL16"/>
    <property type="match status" value="1"/>
</dbReference>
<dbReference type="InterPro" id="IPR047873">
    <property type="entry name" value="Ribosomal_uL16"/>
</dbReference>
<dbReference type="InterPro" id="IPR000114">
    <property type="entry name" value="Ribosomal_uL16_bact-type"/>
</dbReference>
<dbReference type="InterPro" id="IPR020798">
    <property type="entry name" value="Ribosomal_uL16_CS"/>
</dbReference>
<dbReference type="InterPro" id="IPR016180">
    <property type="entry name" value="Ribosomal_uL16_dom"/>
</dbReference>
<dbReference type="InterPro" id="IPR036920">
    <property type="entry name" value="Ribosomal_uL16_sf"/>
</dbReference>
<dbReference type="NCBIfam" id="TIGR01164">
    <property type="entry name" value="rplP_bact"/>
    <property type="match status" value="1"/>
</dbReference>
<dbReference type="PANTHER" id="PTHR12220">
    <property type="entry name" value="50S/60S RIBOSOMAL PROTEIN L16"/>
    <property type="match status" value="1"/>
</dbReference>
<dbReference type="PANTHER" id="PTHR12220:SF13">
    <property type="entry name" value="LARGE RIBOSOMAL SUBUNIT PROTEIN UL16M"/>
    <property type="match status" value="1"/>
</dbReference>
<dbReference type="Pfam" id="PF00252">
    <property type="entry name" value="Ribosomal_L16"/>
    <property type="match status" value="1"/>
</dbReference>
<dbReference type="PRINTS" id="PR00060">
    <property type="entry name" value="RIBOSOMALL16"/>
</dbReference>
<dbReference type="SUPFAM" id="SSF54686">
    <property type="entry name" value="Ribosomal protein L16p/L10e"/>
    <property type="match status" value="1"/>
</dbReference>
<dbReference type="PROSITE" id="PS00586">
    <property type="entry name" value="RIBOSOMAL_L16_1"/>
    <property type="match status" value="1"/>
</dbReference>
<dbReference type="PROSITE" id="PS00701">
    <property type="entry name" value="RIBOSOMAL_L16_2"/>
    <property type="match status" value="1"/>
</dbReference>
<reference key="1">
    <citation type="journal article" date="2008" name="BMC Genomics">
        <title>Acidithiobacillus ferrooxidans metabolism: from genome sequence to industrial applications.</title>
        <authorList>
            <person name="Valdes J."/>
            <person name="Pedroso I."/>
            <person name="Quatrini R."/>
            <person name="Dodson R.J."/>
            <person name="Tettelin H."/>
            <person name="Blake R. II"/>
            <person name="Eisen J.A."/>
            <person name="Holmes D.S."/>
        </authorList>
    </citation>
    <scope>NUCLEOTIDE SEQUENCE [LARGE SCALE GENOMIC DNA]</scope>
    <source>
        <strain>ATCC 23270 / DSM 14882 / CIP 104768 / NCIMB 8455</strain>
    </source>
</reference>
<proteinExistence type="inferred from homology"/>
<comment type="function">
    <text evidence="1">Binds 23S rRNA and is also seen to make contacts with the A and possibly P site tRNAs.</text>
</comment>
<comment type="subunit">
    <text evidence="1">Part of the 50S ribosomal subunit.</text>
</comment>
<comment type="similarity">
    <text evidence="1">Belongs to the universal ribosomal protein uL16 family.</text>
</comment>
<organism>
    <name type="scientific">Acidithiobacillus ferrooxidans (strain ATCC 23270 / DSM 14882 / CIP 104768 / NCIMB 8455)</name>
    <name type="common">Ferrobacillus ferrooxidans (strain ATCC 23270)</name>
    <dbReference type="NCBI Taxonomy" id="243159"/>
    <lineage>
        <taxon>Bacteria</taxon>
        <taxon>Pseudomonadati</taxon>
        <taxon>Pseudomonadota</taxon>
        <taxon>Acidithiobacillia</taxon>
        <taxon>Acidithiobacillales</taxon>
        <taxon>Acidithiobacillaceae</taxon>
        <taxon>Acidithiobacillus</taxon>
    </lineage>
</organism>
<sequence length="138" mass="15453">MLQPKRTKFRKQHKGRNRGVATRGSKVSFGEFGLKAVGRGRITARQLEAARRAISRHVKRGGRIWIRIFPDKPISKKPAEVRMGKGKGNPEYWVALIQPGKVLYEMEGVTEEVAREAFALGAAKLPVQTAFVSRRVMG</sequence>
<evidence type="ECO:0000255" key="1">
    <source>
        <dbReference type="HAMAP-Rule" id="MF_01342"/>
    </source>
</evidence>
<evidence type="ECO:0000256" key="2">
    <source>
        <dbReference type="SAM" id="MobiDB-lite"/>
    </source>
</evidence>
<evidence type="ECO:0000305" key="3"/>
<feature type="chain" id="PRO_1000142912" description="Large ribosomal subunit protein uL16">
    <location>
        <begin position="1"/>
        <end position="138"/>
    </location>
</feature>
<feature type="region of interest" description="Disordered" evidence="2">
    <location>
        <begin position="1"/>
        <end position="22"/>
    </location>
</feature>
<feature type="compositionally biased region" description="Basic residues" evidence="2">
    <location>
        <begin position="1"/>
        <end position="17"/>
    </location>
</feature>